<dbReference type="EMBL" id="CR382125">
    <property type="protein sequence ID" value="CAG99524.1"/>
    <property type="molecule type" value="Genomic_DNA"/>
</dbReference>
<dbReference type="RefSeq" id="XP_454437.1">
    <property type="nucleotide sequence ID" value="XM_454437.1"/>
</dbReference>
<dbReference type="SMR" id="Q6CNQ2"/>
<dbReference type="FunCoup" id="Q6CNQ2">
    <property type="interactions" value="135"/>
</dbReference>
<dbReference type="STRING" id="284590.Q6CNQ2"/>
<dbReference type="PaxDb" id="284590-Q6CNQ2"/>
<dbReference type="KEGG" id="kla:KLLA0_E10803g"/>
<dbReference type="eggNOG" id="ENOG502QUX2">
    <property type="taxonomic scope" value="Eukaryota"/>
</dbReference>
<dbReference type="HOGENOM" id="CLU_334653_0_0_1"/>
<dbReference type="InParanoid" id="Q6CNQ2"/>
<dbReference type="OMA" id="ESSAIWA"/>
<dbReference type="Proteomes" id="UP000000598">
    <property type="component" value="Chromosome E"/>
</dbReference>
<dbReference type="GO" id="GO:0005739">
    <property type="term" value="C:mitochondrion"/>
    <property type="evidence" value="ECO:0007669"/>
    <property type="project" value="UniProtKB-SubCell"/>
</dbReference>
<dbReference type="GO" id="GO:0006397">
    <property type="term" value="P:mRNA processing"/>
    <property type="evidence" value="ECO:0007669"/>
    <property type="project" value="UniProtKB-KW"/>
</dbReference>
<dbReference type="GO" id="GO:0008380">
    <property type="term" value="P:RNA splicing"/>
    <property type="evidence" value="ECO:0007669"/>
    <property type="project" value="UniProtKB-KW"/>
</dbReference>
<dbReference type="Gene3D" id="1.25.40.10">
    <property type="entry name" value="Tetratricopeptide repeat domain"/>
    <property type="match status" value="1"/>
</dbReference>
<dbReference type="InterPro" id="IPR002885">
    <property type="entry name" value="Pentatricopeptide_rpt"/>
</dbReference>
<dbReference type="InterPro" id="IPR011990">
    <property type="entry name" value="TPR-like_helical_dom_sf"/>
</dbReference>
<dbReference type="PANTHER" id="PTHR47936:SF1">
    <property type="entry name" value="PENTATRICOPEPTIDE REPEAT-CONTAINING PROTEIN GUN1, CHLOROPLASTIC"/>
    <property type="match status" value="1"/>
</dbReference>
<dbReference type="PANTHER" id="PTHR47936">
    <property type="entry name" value="PPR_LONG DOMAIN-CONTAINING PROTEIN"/>
    <property type="match status" value="1"/>
</dbReference>
<dbReference type="Pfam" id="PF01535">
    <property type="entry name" value="PPR"/>
    <property type="match status" value="2"/>
</dbReference>
<dbReference type="PROSITE" id="PS51375">
    <property type="entry name" value="PPR"/>
    <property type="match status" value="2"/>
</dbReference>
<accession>Q6CNQ2</accession>
<proteinExistence type="inferred from homology"/>
<feature type="transit peptide" description="Mitochondrion" evidence="2">
    <location>
        <begin position="1"/>
        <end position="25"/>
    </location>
</feature>
<feature type="chain" id="PRO_0000402263" description="Mitochondrial 15S rRNA processing factor CCM1" evidence="2">
    <location>
        <begin position="26"/>
        <end position="853"/>
    </location>
</feature>
<feature type="repeat" description="PPR 1" evidence="3">
    <location>
        <begin position="310"/>
        <end position="344"/>
    </location>
</feature>
<feature type="repeat" description="PPR 2" evidence="3">
    <location>
        <begin position="347"/>
        <end position="381"/>
    </location>
</feature>
<reference key="1">
    <citation type="journal article" date="2004" name="Nature">
        <title>Genome evolution in yeasts.</title>
        <authorList>
            <person name="Dujon B."/>
            <person name="Sherman D."/>
            <person name="Fischer G."/>
            <person name="Durrens P."/>
            <person name="Casaregola S."/>
            <person name="Lafontaine I."/>
            <person name="de Montigny J."/>
            <person name="Marck C."/>
            <person name="Neuveglise C."/>
            <person name="Talla E."/>
            <person name="Goffard N."/>
            <person name="Frangeul L."/>
            <person name="Aigle M."/>
            <person name="Anthouard V."/>
            <person name="Babour A."/>
            <person name="Barbe V."/>
            <person name="Barnay S."/>
            <person name="Blanchin S."/>
            <person name="Beckerich J.-M."/>
            <person name="Beyne E."/>
            <person name="Bleykasten C."/>
            <person name="Boisrame A."/>
            <person name="Boyer J."/>
            <person name="Cattolico L."/>
            <person name="Confanioleri F."/>
            <person name="de Daruvar A."/>
            <person name="Despons L."/>
            <person name="Fabre E."/>
            <person name="Fairhead C."/>
            <person name="Ferry-Dumazet H."/>
            <person name="Groppi A."/>
            <person name="Hantraye F."/>
            <person name="Hennequin C."/>
            <person name="Jauniaux N."/>
            <person name="Joyet P."/>
            <person name="Kachouri R."/>
            <person name="Kerrest A."/>
            <person name="Koszul R."/>
            <person name="Lemaire M."/>
            <person name="Lesur I."/>
            <person name="Ma L."/>
            <person name="Muller H."/>
            <person name="Nicaud J.-M."/>
            <person name="Nikolski M."/>
            <person name="Oztas S."/>
            <person name="Ozier-Kalogeropoulos O."/>
            <person name="Pellenz S."/>
            <person name="Potier S."/>
            <person name="Richard G.-F."/>
            <person name="Straub M.-L."/>
            <person name="Suleau A."/>
            <person name="Swennen D."/>
            <person name="Tekaia F."/>
            <person name="Wesolowski-Louvel M."/>
            <person name="Westhof E."/>
            <person name="Wirth B."/>
            <person name="Zeniou-Meyer M."/>
            <person name="Zivanovic Y."/>
            <person name="Bolotin-Fukuhara M."/>
            <person name="Thierry A."/>
            <person name="Bouchier C."/>
            <person name="Caudron B."/>
            <person name="Scarpelli C."/>
            <person name="Gaillardin C."/>
            <person name="Weissenbach J."/>
            <person name="Wincker P."/>
            <person name="Souciet J.-L."/>
        </authorList>
    </citation>
    <scope>NUCLEOTIDE SEQUENCE [LARGE SCALE GENOMIC DNA]</scope>
    <source>
        <strain>ATCC 8585 / CBS 2359 / DSM 70799 / NBRC 1267 / NRRL Y-1140 / WM37</strain>
    </source>
</reference>
<name>CCM1_KLULA</name>
<protein>
    <recommendedName>
        <fullName>Mitochondrial 15S rRNA processing factor CCM1</fullName>
    </recommendedName>
</protein>
<keyword id="KW-0496">Mitochondrion</keyword>
<keyword id="KW-0507">mRNA processing</keyword>
<keyword id="KW-0508">mRNA splicing</keyword>
<keyword id="KW-1185">Reference proteome</keyword>
<keyword id="KW-0677">Repeat</keyword>
<keyword id="KW-0809">Transit peptide</keyword>
<evidence type="ECO:0000250" key="1">
    <source>
        <dbReference type="UniProtKB" id="P48237"/>
    </source>
</evidence>
<evidence type="ECO:0000255" key="2"/>
<evidence type="ECO:0000255" key="3">
    <source>
        <dbReference type="PROSITE-ProRule" id="PRU00708"/>
    </source>
</evidence>
<evidence type="ECO:0000305" key="4"/>
<organism>
    <name type="scientific">Kluyveromyces lactis (strain ATCC 8585 / CBS 2359 / DSM 70799 / NBRC 1267 / NRRL Y-1140 / WM37)</name>
    <name type="common">Yeast</name>
    <name type="synonym">Candida sphaerica</name>
    <dbReference type="NCBI Taxonomy" id="284590"/>
    <lineage>
        <taxon>Eukaryota</taxon>
        <taxon>Fungi</taxon>
        <taxon>Dikarya</taxon>
        <taxon>Ascomycota</taxon>
        <taxon>Saccharomycotina</taxon>
        <taxon>Saccharomycetes</taxon>
        <taxon>Saccharomycetales</taxon>
        <taxon>Saccharomycetaceae</taxon>
        <taxon>Kluyveromyces</taxon>
    </lineage>
</organism>
<comment type="function">
    <text evidence="1">Regulates mitochondrial small subunit maturation by controlling 15S rRNA 5'-end processing. Localizes to the 5' precursor of the 15S rRNA in a position that is subsequently occupied by mS47 in the mature yeast mtSSU. Uses structure and sequence-specific RNA recognition, binding to a single-stranded region of the precursor and specifically recognizing bases -6 to -1. The exchange of Ccm1 for mS47 is coupled to the irreversible removal of precursor rRNA that is accompanied by conformational changes of the mitoribosomal proteins uS5m and mS26. These conformational changes signal completion of 5'-end rRNA processing through protection of the mature 5'-end of the 15S rRNA and stabilization of mS47. The removal of the 5' precursor together with the dissociation of Ccm1 may be catalyzed by the 5'-3' exoribonuclease Pet127. Involved in the specific removal of group I introns in mitochondrial encoded transcripts.</text>
</comment>
<comment type="subunit">
    <text evidence="1">Binds to mitochondrial small subunit 15S rRNA.</text>
</comment>
<comment type="subcellular location">
    <subcellularLocation>
        <location evidence="1">Mitochondrion</location>
    </subcellularLocation>
</comment>
<comment type="miscellaneous">
    <text evidence="1">Involved in mitochondrial-nuclear incompatibility, a major determinant in reproductive isolation between species, through hybrid incompatibility of Ccm1 and its interacting partner 15S rRNA between yeast species.</text>
</comment>
<comment type="similarity">
    <text evidence="4">Belongs to the CCM1 family.</text>
</comment>
<sequence>MLSLGKNGKTSSTLVRNARRSVIMPASRDVRSRKRRARSVTDTKDVLDLDSIDFTNEKEVQFKVNQLKEFTRNLREQIKYTDELKRKHVIEEEETKSVDPEMHDFDSDAGVILSSLNDKVAGPGAEQNLSTLLLSDKADTSLLPERLSERIKDKDLILRCLFDKRNRDFNPIVTELYHSEQRLKGLGIQFIYSKILSKFDKLSFTSLSQLDEMIMESVGNDSSRLNGNLYEHLMLSFSRVTSPSAQGKLEVCGKLRELTERMDATLSKKSFQPTQYMLNACIFAASKAMSWEYMDFFLKKFTSTYDMQPNRKNYTTVISFYTKMEHYKKAWQLFDSLKFLSLEHKPDTKVYNLMLEVCQKEKNYARSLDIFQEMDDLNVTKDLKTYLNAAKSLALSSADNVTSEGKADSLRLMSWKYIHKIHDDPKLSKQLTENPRNNMLLLETMMVLSAYDGDVGFARALYYKYTNALFKAHFYEFKKYHKDTDPVDYIRIWKKSLSAQMFNWLMLSYSKFKKSRLPVLLGYPEGSSLRRSMIYSVDYSGRDSSYENSNIQLPMLPMTELNDAELTINESKALWRFNLEFGGNYDIRELPEGMQTVKDIENIVKCAKTVNEFKLQISQRLLEWKNRYVNHKILNMKSLITFLTIPIRLHEPNEFKLRLQEFTFQAFEFNERVEYQFKKSKTNELESPVLSKDFNTTDSNALVDNGIIPSEFLLYLVSMKHKLATNCAIYEVSMKAAIAFHDYELAMTTWKNRGKFRMTDAFQKLTPGERQQSDATFAQLMVEYFTNEKMYQDALSIILSSLKTVNWQYSMVKSLHRALLAIEDENSAARLLSVVNRKSKIVELEEEIKSLDL</sequence>
<gene>
    <name type="primary">CCM1</name>
    <name type="ordered locus">KLLA0E10803g</name>
</gene>